<comment type="function">
    <text evidence="1">Component of the ribosome, a large ribonucleoprotein complex responsible for the synthesis of proteins in the cell. The small ribosomal subunit (SSU) binds messenger RNAs (mRNAs) and translates the encoded message by selecting cognate aminoacyl-transfer RNA (tRNA) molecules. The large subunit (LSU) contains the ribosomal catalytic site termed the peptidyl transferase center (PTC), which catalyzes the formation of peptide bonds, thereby polymerizing the amino acids delivered by tRNAs into a polypeptide chain. The nascent polypeptides leave the ribosome through a tunnel in the LSU and interact with protein factors that function in enzymatic processing, targeting, and the membrane insertion of nascent chains at the exit of the ribosomal tunnel.</text>
</comment>
<comment type="subunit">
    <text evidence="1">Component of the large ribosomal subunit (LSU).</text>
</comment>
<comment type="subcellular location">
    <subcellularLocation>
        <location evidence="1">Cytoplasm</location>
    </subcellularLocation>
    <subcellularLocation>
        <location evidence="1">Nucleus</location>
    </subcellularLocation>
</comment>
<comment type="similarity">
    <text evidence="3">Belongs to the universal ribosomal protein uL18 family.</text>
</comment>
<comment type="sequence caution" evidence="3">
    <conflict type="erroneous gene model prediction">
        <sequence resource="EMBL-CDS" id="EAA14773"/>
    </conflict>
</comment>
<gene>
    <name type="primary">RpL5</name>
    <name type="ORF">AGAP009031</name>
</gene>
<feature type="chain" id="PRO_0000131441" description="Large ribosomal subunit protein uL18">
    <location>
        <begin position="1"/>
        <end position="325"/>
    </location>
</feature>
<feature type="region of interest" description="Disordered" evidence="2">
    <location>
        <begin position="247"/>
        <end position="300"/>
    </location>
</feature>
<feature type="compositionally biased region" description="Low complexity" evidence="2">
    <location>
        <begin position="262"/>
        <end position="273"/>
    </location>
</feature>
<feature type="compositionally biased region" description="Low complexity" evidence="2">
    <location>
        <begin position="282"/>
        <end position="291"/>
    </location>
</feature>
<feature type="sequence conflict" description="In Ref. 1; AAB97731." evidence="3" ref="1">
    <original>A</original>
    <variation>R</variation>
    <location>
        <position position="67"/>
    </location>
</feature>
<feature type="sequence conflict" description="In Ref. 1; AAB97731." evidence="3" ref="1">
    <original>A</original>
    <variation>S</variation>
    <location>
        <position position="157"/>
    </location>
</feature>
<feature type="sequence conflict" description="In Ref. 1; AAB97731." evidence="3" ref="1">
    <original>R</original>
    <variation>RK</variation>
    <location>
        <position position="248"/>
    </location>
</feature>
<feature type="sequence conflict" description="In Ref. 1; AAB97731." evidence="3" ref="1">
    <original>R</original>
    <variation>RL</variation>
    <location>
        <position position="298"/>
    </location>
</feature>
<feature type="sequence conflict" description="In Ref. 1; AAB97731." evidence="3" ref="1">
    <original>RR</original>
    <variation>QG</variation>
    <location>
        <begin position="324"/>
        <end position="325"/>
    </location>
</feature>
<reference key="1">
    <citation type="submission" date="1997-05" db="EMBL/GenBank/DDBJ databases">
        <title>A comprehensive physical map of the malaria vector Anopheles gambiae.</title>
        <authorList>
            <person name="Cornel A.J."/>
            <person name="Kumar V."/>
            <person name="Mukabayire O."/>
            <person name="Salazar Rafferty C."/>
            <person name="Petrarca V."/>
            <person name="Coluzzi M."/>
            <person name="Collins F.H."/>
        </authorList>
    </citation>
    <scope>NUCLEOTIDE SEQUENCE [MRNA]</scope>
    <source>
        <strain>G3</strain>
    </source>
</reference>
<reference key="2">
    <citation type="journal article" date="2002" name="Science">
        <title>The genome sequence of the malaria mosquito Anopheles gambiae.</title>
        <authorList>
            <person name="Holt R.A."/>
            <person name="Subramanian G.M."/>
            <person name="Halpern A."/>
            <person name="Sutton G.G."/>
            <person name="Charlab R."/>
            <person name="Nusskern D.R."/>
            <person name="Wincker P."/>
            <person name="Clark A.G."/>
            <person name="Ribeiro J.M.C."/>
            <person name="Wides R."/>
            <person name="Salzberg S.L."/>
            <person name="Loftus B.J."/>
            <person name="Yandell M.D."/>
            <person name="Majoros W.H."/>
            <person name="Rusch D.B."/>
            <person name="Lai Z."/>
            <person name="Kraft C.L."/>
            <person name="Abril J.F."/>
            <person name="Anthouard V."/>
            <person name="Arensburger P."/>
            <person name="Atkinson P.W."/>
            <person name="Baden H."/>
            <person name="de Berardinis V."/>
            <person name="Baldwin D."/>
            <person name="Benes V."/>
            <person name="Biedler J."/>
            <person name="Blass C."/>
            <person name="Bolanos R."/>
            <person name="Boscus D."/>
            <person name="Barnstead M."/>
            <person name="Cai S."/>
            <person name="Center A."/>
            <person name="Chaturverdi K."/>
            <person name="Christophides G.K."/>
            <person name="Chrystal M.A.M."/>
            <person name="Clamp M."/>
            <person name="Cravchik A."/>
            <person name="Curwen V."/>
            <person name="Dana A."/>
            <person name="Delcher A."/>
            <person name="Dew I."/>
            <person name="Evans C.A."/>
            <person name="Flanigan M."/>
            <person name="Grundschober-Freimoser A."/>
            <person name="Friedli L."/>
            <person name="Gu Z."/>
            <person name="Guan P."/>
            <person name="Guigo R."/>
            <person name="Hillenmeyer M.E."/>
            <person name="Hladun S.L."/>
            <person name="Hogan J.R."/>
            <person name="Hong Y.S."/>
            <person name="Hoover J."/>
            <person name="Jaillon O."/>
            <person name="Ke Z."/>
            <person name="Kodira C.D."/>
            <person name="Kokoza E."/>
            <person name="Koutsos A."/>
            <person name="Letunic I."/>
            <person name="Levitsky A.A."/>
            <person name="Liang Y."/>
            <person name="Lin J.-J."/>
            <person name="Lobo N.F."/>
            <person name="Lopez J.R."/>
            <person name="Malek J.A."/>
            <person name="McIntosh T.C."/>
            <person name="Meister S."/>
            <person name="Miller J.R."/>
            <person name="Mobarry C."/>
            <person name="Mongin E."/>
            <person name="Murphy S.D."/>
            <person name="O'Brochta D.A."/>
            <person name="Pfannkoch C."/>
            <person name="Qi R."/>
            <person name="Regier M.A."/>
            <person name="Remington K."/>
            <person name="Shao H."/>
            <person name="Sharakhova M.V."/>
            <person name="Sitter C.D."/>
            <person name="Shetty J."/>
            <person name="Smith T.J."/>
            <person name="Strong R."/>
            <person name="Sun J."/>
            <person name="Thomasova D."/>
            <person name="Ton L.Q."/>
            <person name="Topalis P."/>
            <person name="Tu Z.J."/>
            <person name="Unger M.F."/>
            <person name="Walenz B."/>
            <person name="Wang A.H."/>
            <person name="Wang J."/>
            <person name="Wang M."/>
            <person name="Wang X."/>
            <person name="Woodford K.J."/>
            <person name="Wortman J.R."/>
            <person name="Wu M."/>
            <person name="Yao A."/>
            <person name="Zdobnov E.M."/>
            <person name="Zhang H."/>
            <person name="Zhao Q."/>
            <person name="Zhao S."/>
            <person name="Zhu S.C."/>
            <person name="Zhimulev I."/>
            <person name="Coluzzi M."/>
            <person name="della Torre A."/>
            <person name="Roth C.W."/>
            <person name="Louis C."/>
            <person name="Kalush F."/>
            <person name="Mural R.J."/>
            <person name="Myers E.W."/>
            <person name="Adams M.D."/>
            <person name="Smith H.O."/>
            <person name="Broder S."/>
            <person name="Gardner M.J."/>
            <person name="Fraser C.M."/>
            <person name="Birney E."/>
            <person name="Bork P."/>
            <person name="Brey P.T."/>
            <person name="Venter J.C."/>
            <person name="Weissenbach J."/>
            <person name="Kafatos F.C."/>
            <person name="Collins F.H."/>
            <person name="Hoffman S.L."/>
        </authorList>
    </citation>
    <scope>NUCLEOTIDE SEQUENCE [LARGE SCALE GENOMIC DNA]</scope>
    <source>
        <strain>PEST</strain>
    </source>
</reference>
<name>RL5_ANOGA</name>
<evidence type="ECO:0000250" key="1">
    <source>
        <dbReference type="UniProtKB" id="P26321"/>
    </source>
</evidence>
<evidence type="ECO:0000256" key="2">
    <source>
        <dbReference type="SAM" id="MobiDB-lite"/>
    </source>
</evidence>
<evidence type="ECO:0000305" key="3"/>
<accession>O44248</accession>
<accession>Q5TNI8</accession>
<accession>Q7PWA8</accession>
<sequence length="325" mass="37782">MGFVKVVKNKQYFKRYQVRFRRRREGKTDYYARKRLIFQDKNKYNTPKFRLIVRLSNRDITCQIAYARIEGDRIVCAAYSHELPRYGVKVGLTNYAAAYCTGLLVARRILQKLRLDTLYAGCTDVTGEEYLVEPVDEGPAAFRCYLDVGLARTTTGARVFGAMKGAVDGGLNIPHSVKRFPGYSAENKSFNAEMHRDHIFGLHVANYMRTLEEEDEEAFKRQFSKYISLGIKADDIENIYKNAHASIRIPPSRRNPRRRSPRSGGRWPSCRSPPARRRSRSTRPTSWPRSRPTSKPKRPRRRRPFFFSSWWCIILVLPCSSPVRR</sequence>
<organism>
    <name type="scientific">Anopheles gambiae</name>
    <name type="common">African malaria mosquito</name>
    <dbReference type="NCBI Taxonomy" id="7165"/>
    <lineage>
        <taxon>Eukaryota</taxon>
        <taxon>Metazoa</taxon>
        <taxon>Ecdysozoa</taxon>
        <taxon>Arthropoda</taxon>
        <taxon>Hexapoda</taxon>
        <taxon>Insecta</taxon>
        <taxon>Pterygota</taxon>
        <taxon>Neoptera</taxon>
        <taxon>Endopterygota</taxon>
        <taxon>Diptera</taxon>
        <taxon>Nematocera</taxon>
        <taxon>Culicoidea</taxon>
        <taxon>Culicidae</taxon>
        <taxon>Anophelinae</taxon>
        <taxon>Anopheles</taxon>
    </lineage>
</organism>
<keyword id="KW-0963">Cytoplasm</keyword>
<keyword id="KW-0539">Nucleus</keyword>
<keyword id="KW-1185">Reference proteome</keyword>
<keyword id="KW-0687">Ribonucleoprotein</keyword>
<keyword id="KW-0689">Ribosomal protein</keyword>
<keyword id="KW-0694">RNA-binding</keyword>
<keyword id="KW-0699">rRNA-binding</keyword>
<dbReference type="EMBL" id="AF002238">
    <property type="protein sequence ID" value="AAB97731.1"/>
    <property type="molecule type" value="mRNA"/>
</dbReference>
<dbReference type="EMBL" id="AAAB01008984">
    <property type="protein sequence ID" value="EAA14773.3"/>
    <property type="status" value="ALT_SEQ"/>
    <property type="molecule type" value="Genomic_DNA"/>
</dbReference>
<dbReference type="RefSeq" id="XP_319782.3">
    <property type="nucleotide sequence ID" value="XM_319782.5"/>
</dbReference>
<dbReference type="SMR" id="O44248"/>
<dbReference type="FunCoup" id="O44248">
    <property type="interactions" value="1759"/>
</dbReference>
<dbReference type="STRING" id="7165.O44248"/>
<dbReference type="PaxDb" id="7165-AGAP009031-PA"/>
<dbReference type="GeneID" id="1279989"/>
<dbReference type="KEGG" id="aga:1279989"/>
<dbReference type="CTD" id="6125"/>
<dbReference type="VEuPathDB" id="VectorBase:AGAMI1_014986"/>
<dbReference type="VEuPathDB" id="VectorBase:AGAP009031"/>
<dbReference type="eggNOG" id="KOG0875">
    <property type="taxonomic scope" value="Eukaryota"/>
</dbReference>
<dbReference type="HOGENOM" id="CLU_056222_1_0_1"/>
<dbReference type="InParanoid" id="O44248"/>
<dbReference type="Proteomes" id="UP000007062">
    <property type="component" value="Chromosome 3R"/>
</dbReference>
<dbReference type="GO" id="GO:0022625">
    <property type="term" value="C:cytosolic large ribosomal subunit"/>
    <property type="evidence" value="ECO:0000318"/>
    <property type="project" value="GO_Central"/>
</dbReference>
<dbReference type="GO" id="GO:0005634">
    <property type="term" value="C:nucleus"/>
    <property type="evidence" value="ECO:0007669"/>
    <property type="project" value="UniProtKB-SubCell"/>
</dbReference>
<dbReference type="GO" id="GO:0008097">
    <property type="term" value="F:5S rRNA binding"/>
    <property type="evidence" value="ECO:0000318"/>
    <property type="project" value="GO_Central"/>
</dbReference>
<dbReference type="GO" id="GO:0003735">
    <property type="term" value="F:structural constituent of ribosome"/>
    <property type="evidence" value="ECO:0000318"/>
    <property type="project" value="GO_Central"/>
</dbReference>
<dbReference type="GO" id="GO:0000027">
    <property type="term" value="P:ribosomal large subunit assembly"/>
    <property type="evidence" value="ECO:0000318"/>
    <property type="project" value="GO_Central"/>
</dbReference>
<dbReference type="GO" id="GO:0006412">
    <property type="term" value="P:translation"/>
    <property type="evidence" value="ECO:0007669"/>
    <property type="project" value="InterPro"/>
</dbReference>
<dbReference type="CDD" id="cd00432">
    <property type="entry name" value="Ribosomal_L18_L5e"/>
    <property type="match status" value="1"/>
</dbReference>
<dbReference type="FunFam" id="3.30.420.100:FF:000002">
    <property type="entry name" value="60S ribosomal protein L5"/>
    <property type="match status" value="1"/>
</dbReference>
<dbReference type="Gene3D" id="3.30.420.100">
    <property type="match status" value="1"/>
</dbReference>
<dbReference type="HAMAP" id="MF_01337_A">
    <property type="entry name" value="Ribosomal_uL18_A"/>
    <property type="match status" value="1"/>
</dbReference>
<dbReference type="InterPro" id="IPR005485">
    <property type="entry name" value="Rbsml_uL18_euk"/>
</dbReference>
<dbReference type="InterPro" id="IPR025607">
    <property type="entry name" value="Ribosomal_uL18_C_euk"/>
</dbReference>
<dbReference type="PANTHER" id="PTHR23410:SF12">
    <property type="entry name" value="LARGE RIBOSOMAL SUBUNIT PROTEIN UL18"/>
    <property type="match status" value="1"/>
</dbReference>
<dbReference type="PANTHER" id="PTHR23410">
    <property type="entry name" value="RIBOSOMAL PROTEIN L5-RELATED"/>
    <property type="match status" value="1"/>
</dbReference>
<dbReference type="Pfam" id="PF14204">
    <property type="entry name" value="Ribosomal_L18_c"/>
    <property type="match status" value="1"/>
</dbReference>
<dbReference type="Pfam" id="PF17144">
    <property type="entry name" value="Ribosomal_L5e"/>
    <property type="match status" value="1"/>
</dbReference>
<dbReference type="PRINTS" id="PR00058">
    <property type="entry name" value="RIBOSOMALL5"/>
</dbReference>
<dbReference type="SUPFAM" id="SSF53137">
    <property type="entry name" value="Translational machinery components"/>
    <property type="match status" value="1"/>
</dbReference>
<protein>
    <recommendedName>
        <fullName evidence="3">Large ribosomal subunit protein uL18</fullName>
    </recommendedName>
    <alternativeName>
        <fullName>60S ribosomal protein L5</fullName>
    </alternativeName>
</protein>
<proteinExistence type="evidence at transcript level"/>